<gene>
    <name evidence="1" type="primary">adk</name>
    <name type="ordered locus">SAV2229</name>
</gene>
<evidence type="ECO:0000255" key="1">
    <source>
        <dbReference type="HAMAP-Rule" id="MF_00235"/>
    </source>
</evidence>
<keyword id="KW-0067">ATP-binding</keyword>
<keyword id="KW-0963">Cytoplasm</keyword>
<keyword id="KW-0418">Kinase</keyword>
<keyword id="KW-0479">Metal-binding</keyword>
<keyword id="KW-0545">Nucleotide biosynthesis</keyword>
<keyword id="KW-0547">Nucleotide-binding</keyword>
<keyword id="KW-0808">Transferase</keyword>
<keyword id="KW-0862">Zinc</keyword>
<proteinExistence type="inferred from homology"/>
<sequence length="215" mass="23974">MNIILMGLPGAGKGTQASEIVKKFPIPHISTGDMFRKAIKEETELGKEAKSYMDRGELVPDEVTVGIVKERISEDDAKKGFLLDGFPRTIEQAEALNNIMSELDRNIDAVINIEVPEEELMNRLTGRRICESCGTTYHLVFNPPKVEGICDIDGGKLYQREDDNPETVANRLSVNIKQSKPILDFYDQKGVLKNIDGSKDISDVTKDVIDILDHL</sequence>
<organism>
    <name type="scientific">Staphylococcus aureus (strain Mu50 / ATCC 700699)</name>
    <dbReference type="NCBI Taxonomy" id="158878"/>
    <lineage>
        <taxon>Bacteria</taxon>
        <taxon>Bacillati</taxon>
        <taxon>Bacillota</taxon>
        <taxon>Bacilli</taxon>
        <taxon>Bacillales</taxon>
        <taxon>Staphylococcaceae</taxon>
        <taxon>Staphylococcus</taxon>
    </lineage>
</organism>
<protein>
    <recommendedName>
        <fullName evidence="1">Adenylate kinase</fullName>
        <shortName evidence="1">AK</shortName>
        <ecNumber evidence="1">2.7.4.3</ecNumber>
    </recommendedName>
    <alternativeName>
        <fullName evidence="1">ATP-AMP transphosphorylase</fullName>
    </alternativeName>
    <alternativeName>
        <fullName evidence="1">ATP:AMP phosphotransferase</fullName>
    </alternativeName>
    <alternativeName>
        <fullName evidence="1">Adenylate monophosphate kinase</fullName>
    </alternativeName>
</protein>
<dbReference type="EC" id="2.7.4.3" evidence="1"/>
<dbReference type="EMBL" id="BA000017">
    <property type="protein sequence ID" value="BAB58391.1"/>
    <property type="molecule type" value="Genomic_DNA"/>
</dbReference>
<dbReference type="RefSeq" id="WP_001021468.1">
    <property type="nucleotide sequence ID" value="NC_002758.2"/>
</dbReference>
<dbReference type="SMR" id="P65201"/>
<dbReference type="KEGG" id="sav:SAV2229"/>
<dbReference type="HOGENOM" id="CLU_032354_1_2_9"/>
<dbReference type="PhylomeDB" id="P65201"/>
<dbReference type="UniPathway" id="UPA00588">
    <property type="reaction ID" value="UER00649"/>
</dbReference>
<dbReference type="Proteomes" id="UP000002481">
    <property type="component" value="Chromosome"/>
</dbReference>
<dbReference type="GO" id="GO:0005737">
    <property type="term" value="C:cytoplasm"/>
    <property type="evidence" value="ECO:0007669"/>
    <property type="project" value="UniProtKB-SubCell"/>
</dbReference>
<dbReference type="GO" id="GO:0004017">
    <property type="term" value="F:adenylate kinase activity"/>
    <property type="evidence" value="ECO:0007669"/>
    <property type="project" value="UniProtKB-UniRule"/>
</dbReference>
<dbReference type="GO" id="GO:0005524">
    <property type="term" value="F:ATP binding"/>
    <property type="evidence" value="ECO:0007669"/>
    <property type="project" value="UniProtKB-UniRule"/>
</dbReference>
<dbReference type="GO" id="GO:0008270">
    <property type="term" value="F:zinc ion binding"/>
    <property type="evidence" value="ECO:0007669"/>
    <property type="project" value="UniProtKB-UniRule"/>
</dbReference>
<dbReference type="GO" id="GO:0044209">
    <property type="term" value="P:AMP salvage"/>
    <property type="evidence" value="ECO:0007669"/>
    <property type="project" value="UniProtKB-UniRule"/>
</dbReference>
<dbReference type="CDD" id="cd01428">
    <property type="entry name" value="ADK"/>
    <property type="match status" value="1"/>
</dbReference>
<dbReference type="FunFam" id="3.40.50.300:FF:000106">
    <property type="entry name" value="Adenylate kinase mitochondrial"/>
    <property type="match status" value="1"/>
</dbReference>
<dbReference type="Gene3D" id="3.40.50.300">
    <property type="entry name" value="P-loop containing nucleotide triphosphate hydrolases"/>
    <property type="match status" value="1"/>
</dbReference>
<dbReference type="HAMAP" id="MF_00235">
    <property type="entry name" value="Adenylate_kinase_Adk"/>
    <property type="match status" value="1"/>
</dbReference>
<dbReference type="InterPro" id="IPR006259">
    <property type="entry name" value="Adenyl_kin_sub"/>
</dbReference>
<dbReference type="InterPro" id="IPR000850">
    <property type="entry name" value="Adenylat/UMP-CMP_kin"/>
</dbReference>
<dbReference type="InterPro" id="IPR033690">
    <property type="entry name" value="Adenylat_kinase_CS"/>
</dbReference>
<dbReference type="InterPro" id="IPR007862">
    <property type="entry name" value="Adenylate_kinase_lid-dom"/>
</dbReference>
<dbReference type="InterPro" id="IPR008144">
    <property type="entry name" value="Guanylate_kin-like_dom"/>
</dbReference>
<dbReference type="InterPro" id="IPR027417">
    <property type="entry name" value="P-loop_NTPase"/>
</dbReference>
<dbReference type="NCBIfam" id="TIGR01351">
    <property type="entry name" value="adk"/>
    <property type="match status" value="1"/>
</dbReference>
<dbReference type="NCBIfam" id="NF001380">
    <property type="entry name" value="PRK00279.1-2"/>
    <property type="match status" value="1"/>
</dbReference>
<dbReference type="NCBIfam" id="NF001381">
    <property type="entry name" value="PRK00279.1-3"/>
    <property type="match status" value="1"/>
</dbReference>
<dbReference type="NCBIfam" id="NF011100">
    <property type="entry name" value="PRK14527.1"/>
    <property type="match status" value="1"/>
</dbReference>
<dbReference type="PANTHER" id="PTHR23359">
    <property type="entry name" value="NUCLEOTIDE KINASE"/>
    <property type="match status" value="1"/>
</dbReference>
<dbReference type="Pfam" id="PF00406">
    <property type="entry name" value="ADK"/>
    <property type="match status" value="1"/>
</dbReference>
<dbReference type="Pfam" id="PF05191">
    <property type="entry name" value="ADK_lid"/>
    <property type="match status" value="1"/>
</dbReference>
<dbReference type="PRINTS" id="PR00094">
    <property type="entry name" value="ADENYLTKNASE"/>
</dbReference>
<dbReference type="SUPFAM" id="SSF52540">
    <property type="entry name" value="P-loop containing nucleoside triphosphate hydrolases"/>
    <property type="match status" value="1"/>
</dbReference>
<dbReference type="PROSITE" id="PS00113">
    <property type="entry name" value="ADENYLATE_KINASE"/>
    <property type="match status" value="1"/>
</dbReference>
<reference key="1">
    <citation type="journal article" date="2001" name="Lancet">
        <title>Whole genome sequencing of meticillin-resistant Staphylococcus aureus.</title>
        <authorList>
            <person name="Kuroda M."/>
            <person name="Ohta T."/>
            <person name="Uchiyama I."/>
            <person name="Baba T."/>
            <person name="Yuzawa H."/>
            <person name="Kobayashi I."/>
            <person name="Cui L."/>
            <person name="Oguchi A."/>
            <person name="Aoki K."/>
            <person name="Nagai Y."/>
            <person name="Lian J.-Q."/>
            <person name="Ito T."/>
            <person name="Kanamori M."/>
            <person name="Matsumaru H."/>
            <person name="Maruyama A."/>
            <person name="Murakami H."/>
            <person name="Hosoyama A."/>
            <person name="Mizutani-Ui Y."/>
            <person name="Takahashi N.K."/>
            <person name="Sawano T."/>
            <person name="Inoue R."/>
            <person name="Kaito C."/>
            <person name="Sekimizu K."/>
            <person name="Hirakawa H."/>
            <person name="Kuhara S."/>
            <person name="Goto S."/>
            <person name="Yabuzaki J."/>
            <person name="Kanehisa M."/>
            <person name="Yamashita A."/>
            <person name="Oshima K."/>
            <person name="Furuya K."/>
            <person name="Yoshino C."/>
            <person name="Shiba T."/>
            <person name="Hattori M."/>
            <person name="Ogasawara N."/>
            <person name="Hayashi H."/>
            <person name="Hiramatsu K."/>
        </authorList>
    </citation>
    <scope>NUCLEOTIDE SEQUENCE [LARGE SCALE GENOMIC DNA]</scope>
    <source>
        <strain>Mu50 / ATCC 700699</strain>
    </source>
</reference>
<feature type="chain" id="PRO_0000158845" description="Adenylate kinase">
    <location>
        <begin position="1"/>
        <end position="215"/>
    </location>
</feature>
<feature type="region of interest" description="NMP" evidence="1">
    <location>
        <begin position="30"/>
        <end position="59"/>
    </location>
</feature>
<feature type="region of interest" description="LID" evidence="1">
    <location>
        <begin position="126"/>
        <end position="163"/>
    </location>
</feature>
<feature type="binding site" evidence="1">
    <location>
        <begin position="10"/>
        <end position="15"/>
    </location>
    <ligand>
        <name>ATP</name>
        <dbReference type="ChEBI" id="CHEBI:30616"/>
    </ligand>
</feature>
<feature type="binding site" evidence="1">
    <location>
        <position position="31"/>
    </location>
    <ligand>
        <name>AMP</name>
        <dbReference type="ChEBI" id="CHEBI:456215"/>
    </ligand>
</feature>
<feature type="binding site" evidence="1">
    <location>
        <position position="36"/>
    </location>
    <ligand>
        <name>AMP</name>
        <dbReference type="ChEBI" id="CHEBI:456215"/>
    </ligand>
</feature>
<feature type="binding site" evidence="1">
    <location>
        <begin position="57"/>
        <end position="59"/>
    </location>
    <ligand>
        <name>AMP</name>
        <dbReference type="ChEBI" id="CHEBI:456215"/>
    </ligand>
</feature>
<feature type="binding site" evidence="1">
    <location>
        <begin position="85"/>
        <end position="88"/>
    </location>
    <ligand>
        <name>AMP</name>
        <dbReference type="ChEBI" id="CHEBI:456215"/>
    </ligand>
</feature>
<feature type="binding site" evidence="1">
    <location>
        <position position="92"/>
    </location>
    <ligand>
        <name>AMP</name>
        <dbReference type="ChEBI" id="CHEBI:456215"/>
    </ligand>
</feature>
<feature type="binding site" evidence="1">
    <location>
        <position position="127"/>
    </location>
    <ligand>
        <name>ATP</name>
        <dbReference type="ChEBI" id="CHEBI:30616"/>
    </ligand>
</feature>
<feature type="binding site" evidence="1">
    <location>
        <position position="130"/>
    </location>
    <ligand>
        <name>Zn(2+)</name>
        <dbReference type="ChEBI" id="CHEBI:29105"/>
        <note>structural</note>
    </ligand>
</feature>
<feature type="binding site" evidence="1">
    <location>
        <position position="133"/>
    </location>
    <ligand>
        <name>Zn(2+)</name>
        <dbReference type="ChEBI" id="CHEBI:29105"/>
        <note>structural</note>
    </ligand>
</feature>
<feature type="binding site" evidence="1">
    <location>
        <begin position="136"/>
        <end position="137"/>
    </location>
    <ligand>
        <name>ATP</name>
        <dbReference type="ChEBI" id="CHEBI:30616"/>
    </ligand>
</feature>
<feature type="binding site" evidence="1">
    <location>
        <position position="150"/>
    </location>
    <ligand>
        <name>Zn(2+)</name>
        <dbReference type="ChEBI" id="CHEBI:29105"/>
        <note>structural</note>
    </ligand>
</feature>
<feature type="binding site" evidence="1">
    <location>
        <position position="153"/>
    </location>
    <ligand>
        <name>Zn(2+)</name>
        <dbReference type="ChEBI" id="CHEBI:29105"/>
        <note>structural</note>
    </ligand>
</feature>
<feature type="binding site" evidence="1">
    <location>
        <position position="160"/>
    </location>
    <ligand>
        <name>AMP</name>
        <dbReference type="ChEBI" id="CHEBI:456215"/>
    </ligand>
</feature>
<feature type="binding site" evidence="1">
    <location>
        <position position="171"/>
    </location>
    <ligand>
        <name>AMP</name>
        <dbReference type="ChEBI" id="CHEBI:456215"/>
    </ligand>
</feature>
<feature type="binding site" evidence="1">
    <location>
        <position position="199"/>
    </location>
    <ligand>
        <name>ATP</name>
        <dbReference type="ChEBI" id="CHEBI:30616"/>
    </ligand>
</feature>
<accession>P65201</accession>
<accession>Q99S40</accession>
<comment type="function">
    <text evidence="1">Catalyzes the reversible transfer of the terminal phosphate group between ATP and AMP. Plays an important role in cellular energy homeostasis and in adenine nucleotide metabolism.</text>
</comment>
<comment type="catalytic activity">
    <reaction evidence="1">
        <text>AMP + ATP = 2 ADP</text>
        <dbReference type="Rhea" id="RHEA:12973"/>
        <dbReference type="ChEBI" id="CHEBI:30616"/>
        <dbReference type="ChEBI" id="CHEBI:456215"/>
        <dbReference type="ChEBI" id="CHEBI:456216"/>
        <dbReference type="EC" id="2.7.4.3"/>
    </reaction>
</comment>
<comment type="pathway">
    <text evidence="1">Purine metabolism; AMP biosynthesis via salvage pathway; AMP from ADP: step 1/1.</text>
</comment>
<comment type="subunit">
    <text evidence="1">Monomer.</text>
</comment>
<comment type="subcellular location">
    <subcellularLocation>
        <location evidence="1">Cytoplasm</location>
    </subcellularLocation>
</comment>
<comment type="domain">
    <text evidence="1">Consists of three domains, a large central CORE domain and two small peripheral domains, NMPbind and LID, which undergo movements during catalysis. The LID domain closes over the site of phosphoryl transfer upon ATP binding. Assembling and dissambling the active center during each catalytic cycle provides an effective means to prevent ATP hydrolysis. Some bacteria have evolved a zinc-coordinating structure that stabilizes the LID domain.</text>
</comment>
<comment type="similarity">
    <text evidence="1">Belongs to the adenylate kinase family.</text>
</comment>
<name>KAD_STAAM</name>